<name>RL13_BURCJ</name>
<sequence>MKTFSAKAHEVTREWYVIDATDKVLGRVASEVARRLRGKHKPEFTPHVDTGDFIIIINASKLKVTGNKTLDKKYYRHSGYPGGIYETTFGKMQERFPGRALEKAVKGMLPKGPLGYAMIKKLKVYAEATHPHSAQQPKALEI</sequence>
<keyword id="KW-0687">Ribonucleoprotein</keyword>
<keyword id="KW-0689">Ribosomal protein</keyword>
<accession>B4EET6</accession>
<reference key="1">
    <citation type="journal article" date="2009" name="J. Bacteriol.">
        <title>The genome of Burkholderia cenocepacia J2315, an epidemic pathogen of cystic fibrosis patients.</title>
        <authorList>
            <person name="Holden M.T."/>
            <person name="Seth-Smith H.M."/>
            <person name="Crossman L.C."/>
            <person name="Sebaihia M."/>
            <person name="Bentley S.D."/>
            <person name="Cerdeno-Tarraga A.M."/>
            <person name="Thomson N.R."/>
            <person name="Bason N."/>
            <person name="Quail M.A."/>
            <person name="Sharp S."/>
            <person name="Cherevach I."/>
            <person name="Churcher C."/>
            <person name="Goodhead I."/>
            <person name="Hauser H."/>
            <person name="Holroyd N."/>
            <person name="Mungall K."/>
            <person name="Scott P."/>
            <person name="Walker D."/>
            <person name="White B."/>
            <person name="Rose H."/>
            <person name="Iversen P."/>
            <person name="Mil-Homens D."/>
            <person name="Rocha E.P."/>
            <person name="Fialho A.M."/>
            <person name="Baldwin A."/>
            <person name="Dowson C."/>
            <person name="Barrell B.G."/>
            <person name="Govan J.R."/>
            <person name="Vandamme P."/>
            <person name="Hart C.A."/>
            <person name="Mahenthiralingam E."/>
            <person name="Parkhill J."/>
        </authorList>
    </citation>
    <scope>NUCLEOTIDE SEQUENCE [LARGE SCALE GENOMIC DNA]</scope>
    <source>
        <strain>ATCC BAA-245 / DSM 16553 / LMG 16656 / NCTC 13227 / J2315 / CF5610</strain>
    </source>
</reference>
<evidence type="ECO:0000255" key="1">
    <source>
        <dbReference type="HAMAP-Rule" id="MF_01366"/>
    </source>
</evidence>
<evidence type="ECO:0000305" key="2"/>
<gene>
    <name evidence="1" type="primary">rplM</name>
    <name type="ordered locus">BceJ2315_32870</name>
    <name type="ORF">BCAL3348</name>
</gene>
<feature type="chain" id="PRO_1000144100" description="Large ribosomal subunit protein uL13">
    <location>
        <begin position="1"/>
        <end position="142"/>
    </location>
</feature>
<proteinExistence type="inferred from homology"/>
<dbReference type="EMBL" id="AM747720">
    <property type="protein sequence ID" value="CAR53671.1"/>
    <property type="molecule type" value="Genomic_DNA"/>
</dbReference>
<dbReference type="RefSeq" id="WP_009687896.1">
    <property type="nucleotide sequence ID" value="NC_011000.1"/>
</dbReference>
<dbReference type="SMR" id="B4EET6"/>
<dbReference type="GeneID" id="98106480"/>
<dbReference type="KEGG" id="bcj:BCAL3348"/>
<dbReference type="eggNOG" id="COG0102">
    <property type="taxonomic scope" value="Bacteria"/>
</dbReference>
<dbReference type="HOGENOM" id="CLU_082184_2_2_4"/>
<dbReference type="BioCyc" id="BCEN216591:G1G1V-3724-MONOMER"/>
<dbReference type="Proteomes" id="UP000001035">
    <property type="component" value="Chromosome 1"/>
</dbReference>
<dbReference type="GO" id="GO:0022625">
    <property type="term" value="C:cytosolic large ribosomal subunit"/>
    <property type="evidence" value="ECO:0007669"/>
    <property type="project" value="TreeGrafter"/>
</dbReference>
<dbReference type="GO" id="GO:0003729">
    <property type="term" value="F:mRNA binding"/>
    <property type="evidence" value="ECO:0007669"/>
    <property type="project" value="TreeGrafter"/>
</dbReference>
<dbReference type="GO" id="GO:0003735">
    <property type="term" value="F:structural constituent of ribosome"/>
    <property type="evidence" value="ECO:0007669"/>
    <property type="project" value="InterPro"/>
</dbReference>
<dbReference type="GO" id="GO:0017148">
    <property type="term" value="P:negative regulation of translation"/>
    <property type="evidence" value="ECO:0007669"/>
    <property type="project" value="TreeGrafter"/>
</dbReference>
<dbReference type="GO" id="GO:0006412">
    <property type="term" value="P:translation"/>
    <property type="evidence" value="ECO:0007669"/>
    <property type="project" value="UniProtKB-UniRule"/>
</dbReference>
<dbReference type="CDD" id="cd00392">
    <property type="entry name" value="Ribosomal_L13"/>
    <property type="match status" value="1"/>
</dbReference>
<dbReference type="FunFam" id="3.90.1180.10:FF:000001">
    <property type="entry name" value="50S ribosomal protein L13"/>
    <property type="match status" value="1"/>
</dbReference>
<dbReference type="Gene3D" id="3.90.1180.10">
    <property type="entry name" value="Ribosomal protein L13"/>
    <property type="match status" value="1"/>
</dbReference>
<dbReference type="HAMAP" id="MF_01366">
    <property type="entry name" value="Ribosomal_uL13"/>
    <property type="match status" value="1"/>
</dbReference>
<dbReference type="InterPro" id="IPR005822">
    <property type="entry name" value="Ribosomal_uL13"/>
</dbReference>
<dbReference type="InterPro" id="IPR005823">
    <property type="entry name" value="Ribosomal_uL13_bac-type"/>
</dbReference>
<dbReference type="InterPro" id="IPR036899">
    <property type="entry name" value="Ribosomal_uL13_sf"/>
</dbReference>
<dbReference type="NCBIfam" id="TIGR01066">
    <property type="entry name" value="rplM_bact"/>
    <property type="match status" value="1"/>
</dbReference>
<dbReference type="PANTHER" id="PTHR11545:SF2">
    <property type="entry name" value="LARGE RIBOSOMAL SUBUNIT PROTEIN UL13M"/>
    <property type="match status" value="1"/>
</dbReference>
<dbReference type="PANTHER" id="PTHR11545">
    <property type="entry name" value="RIBOSOMAL PROTEIN L13"/>
    <property type="match status" value="1"/>
</dbReference>
<dbReference type="Pfam" id="PF00572">
    <property type="entry name" value="Ribosomal_L13"/>
    <property type="match status" value="1"/>
</dbReference>
<dbReference type="PIRSF" id="PIRSF002181">
    <property type="entry name" value="Ribosomal_L13"/>
    <property type="match status" value="1"/>
</dbReference>
<dbReference type="SUPFAM" id="SSF52161">
    <property type="entry name" value="Ribosomal protein L13"/>
    <property type="match status" value="1"/>
</dbReference>
<protein>
    <recommendedName>
        <fullName evidence="1">Large ribosomal subunit protein uL13</fullName>
    </recommendedName>
    <alternativeName>
        <fullName evidence="2">50S ribosomal protein L13</fullName>
    </alternativeName>
</protein>
<organism>
    <name type="scientific">Burkholderia cenocepacia (strain ATCC BAA-245 / DSM 16553 / LMG 16656 / NCTC 13227 / J2315 / CF5610)</name>
    <name type="common">Burkholderia cepacia (strain J2315)</name>
    <dbReference type="NCBI Taxonomy" id="216591"/>
    <lineage>
        <taxon>Bacteria</taxon>
        <taxon>Pseudomonadati</taxon>
        <taxon>Pseudomonadota</taxon>
        <taxon>Betaproteobacteria</taxon>
        <taxon>Burkholderiales</taxon>
        <taxon>Burkholderiaceae</taxon>
        <taxon>Burkholderia</taxon>
        <taxon>Burkholderia cepacia complex</taxon>
    </lineage>
</organism>
<comment type="function">
    <text evidence="1">This protein is one of the early assembly proteins of the 50S ribosomal subunit, although it is not seen to bind rRNA by itself. It is important during the early stages of 50S assembly.</text>
</comment>
<comment type="subunit">
    <text evidence="1">Part of the 50S ribosomal subunit.</text>
</comment>
<comment type="similarity">
    <text evidence="1">Belongs to the universal ribosomal protein uL13 family.</text>
</comment>